<name>RER1_SCHPO</name>
<evidence type="ECO:0000255" key="1"/>
<evidence type="ECO:0000305" key="2"/>
<organism>
    <name type="scientific">Schizosaccharomyces pombe (strain 972 / ATCC 24843)</name>
    <name type="common">Fission yeast</name>
    <dbReference type="NCBI Taxonomy" id="284812"/>
    <lineage>
        <taxon>Eukaryota</taxon>
        <taxon>Fungi</taxon>
        <taxon>Dikarya</taxon>
        <taxon>Ascomycota</taxon>
        <taxon>Taphrinomycotina</taxon>
        <taxon>Schizosaccharomycetes</taxon>
        <taxon>Schizosaccharomycetales</taxon>
        <taxon>Schizosaccharomycetaceae</taxon>
        <taxon>Schizosaccharomyces</taxon>
    </lineage>
</organism>
<accession>Q10358</accession>
<proteinExistence type="inferred from homology"/>
<feature type="chain" id="PRO_0000207591" description="Protein rer1">
    <location>
        <begin position="1"/>
        <end position="184"/>
    </location>
</feature>
<feature type="transmembrane region" description="Helical" evidence="1">
    <location>
        <begin position="34"/>
        <end position="54"/>
    </location>
</feature>
<feature type="transmembrane region" description="Helical" evidence="1">
    <location>
        <begin position="56"/>
        <end position="76"/>
    </location>
</feature>
<feature type="transmembrane region" description="Helical" evidence="1">
    <location>
        <begin position="137"/>
        <end position="157"/>
    </location>
</feature>
<dbReference type="EMBL" id="CU329670">
    <property type="protein sequence ID" value="CAA93892.1"/>
    <property type="molecule type" value="Genomic_DNA"/>
</dbReference>
<dbReference type="PIR" id="T38162">
    <property type="entry name" value="T38162"/>
</dbReference>
<dbReference type="RefSeq" id="NP_594831.1">
    <property type="nucleotide sequence ID" value="NM_001020260.2"/>
</dbReference>
<dbReference type="SMR" id="Q10358"/>
<dbReference type="BioGRID" id="278268">
    <property type="interactions" value="25"/>
</dbReference>
<dbReference type="FunCoup" id="Q10358">
    <property type="interactions" value="551"/>
</dbReference>
<dbReference type="STRING" id="284812.Q10358"/>
<dbReference type="PaxDb" id="4896-SPAC22E12.05c.1"/>
<dbReference type="EnsemblFungi" id="SPAC22E12.05c.1">
    <property type="protein sequence ID" value="SPAC22E12.05c.1:pep"/>
    <property type="gene ID" value="SPAC22E12.05c"/>
</dbReference>
<dbReference type="GeneID" id="2541774"/>
<dbReference type="KEGG" id="spo:2541774"/>
<dbReference type="PomBase" id="SPAC22E12.05c">
    <property type="gene designation" value="rer1"/>
</dbReference>
<dbReference type="VEuPathDB" id="FungiDB:SPAC22E12.05c"/>
<dbReference type="eggNOG" id="KOG1688">
    <property type="taxonomic scope" value="Eukaryota"/>
</dbReference>
<dbReference type="HOGENOM" id="CLU_074889_0_0_1"/>
<dbReference type="InParanoid" id="Q10358"/>
<dbReference type="OMA" id="IDKWIMH"/>
<dbReference type="PhylomeDB" id="Q10358"/>
<dbReference type="PRO" id="PR:Q10358"/>
<dbReference type="Proteomes" id="UP000002485">
    <property type="component" value="Chromosome I"/>
</dbReference>
<dbReference type="GO" id="GO:0030137">
    <property type="term" value="C:COPI-coated vesicle"/>
    <property type="evidence" value="ECO:0000250"/>
    <property type="project" value="PomBase"/>
</dbReference>
<dbReference type="GO" id="GO:0030134">
    <property type="term" value="C:COPII-coated ER to Golgi transport vesicle"/>
    <property type="evidence" value="ECO:0000250"/>
    <property type="project" value="PomBase"/>
</dbReference>
<dbReference type="GO" id="GO:0005783">
    <property type="term" value="C:endoplasmic reticulum"/>
    <property type="evidence" value="ECO:0007669"/>
    <property type="project" value="GOC"/>
</dbReference>
<dbReference type="GO" id="GO:0005794">
    <property type="term" value="C:Golgi apparatus"/>
    <property type="evidence" value="ECO:0000314"/>
    <property type="project" value="PomBase"/>
</dbReference>
<dbReference type="GO" id="GO:0000139">
    <property type="term" value="C:Golgi membrane"/>
    <property type="evidence" value="ECO:0000318"/>
    <property type="project" value="GO_Central"/>
</dbReference>
<dbReference type="GO" id="GO:0006888">
    <property type="term" value="P:endoplasmic reticulum to Golgi vesicle-mediated transport"/>
    <property type="evidence" value="ECO:0000250"/>
    <property type="project" value="PomBase"/>
</dbReference>
<dbReference type="GO" id="GO:0006886">
    <property type="term" value="P:intracellular protein transport"/>
    <property type="evidence" value="ECO:0000305"/>
    <property type="project" value="PomBase"/>
</dbReference>
<dbReference type="GO" id="GO:0006621">
    <property type="term" value="P:protein retention in ER lumen"/>
    <property type="evidence" value="ECO:0000318"/>
    <property type="project" value="GO_Central"/>
</dbReference>
<dbReference type="GO" id="GO:0006890">
    <property type="term" value="P:retrograde vesicle-mediated transport, Golgi to endoplasmic reticulum"/>
    <property type="evidence" value="ECO:0000318"/>
    <property type="project" value="GO_Central"/>
</dbReference>
<dbReference type="InterPro" id="IPR004932">
    <property type="entry name" value="Rer1"/>
</dbReference>
<dbReference type="PANTHER" id="PTHR10743">
    <property type="entry name" value="PROTEIN RER1"/>
    <property type="match status" value="1"/>
</dbReference>
<dbReference type="PANTHER" id="PTHR10743:SF0">
    <property type="entry name" value="PROTEIN RER1"/>
    <property type="match status" value="1"/>
</dbReference>
<dbReference type="Pfam" id="PF03248">
    <property type="entry name" value="Rer1"/>
    <property type="match status" value="1"/>
</dbReference>
<dbReference type="PIRSF" id="PIRSF016013">
    <property type="entry name" value="AtER_Rer1p"/>
    <property type="match status" value="1"/>
</dbReference>
<gene>
    <name type="primary">rer1</name>
    <name type="ORF">SPAC22E12.05c</name>
</gene>
<comment type="subcellular location">
    <subcellularLocation>
        <location evidence="2">Membrane</location>
        <topology evidence="2">Multi-pass membrane protein</topology>
    </subcellularLocation>
</comment>
<comment type="similarity">
    <text evidence="2">Belongs to the RER1 family.</text>
</comment>
<sequence>MEFIQRHIENVKEKKNFAVRLYRHWVDRTIPYTTYRWLTVSGLIALFFIRILLVRGWYIVCYTLAIYLLNLFLAFLTPKFDPSVEQAMKDEEIEEGVLPTSKDDEFRPFIRRLPEFKFWYSSMRATLFALVASFFRIFDVPVFWPILVVYYLVLSFFCFRRQIQHMLKYRYVPFDIGKKKFGSH</sequence>
<keyword id="KW-0472">Membrane</keyword>
<keyword id="KW-1185">Reference proteome</keyword>
<keyword id="KW-0812">Transmembrane</keyword>
<keyword id="KW-1133">Transmembrane helix</keyword>
<reference key="1">
    <citation type="journal article" date="2002" name="Nature">
        <title>The genome sequence of Schizosaccharomyces pombe.</title>
        <authorList>
            <person name="Wood V."/>
            <person name="Gwilliam R."/>
            <person name="Rajandream M.A."/>
            <person name="Lyne M.H."/>
            <person name="Lyne R."/>
            <person name="Stewart A."/>
            <person name="Sgouros J.G."/>
            <person name="Peat N."/>
            <person name="Hayles J."/>
            <person name="Baker S.G."/>
            <person name="Basham D."/>
            <person name="Bowman S."/>
            <person name="Brooks K."/>
            <person name="Brown D."/>
            <person name="Brown S."/>
            <person name="Chillingworth T."/>
            <person name="Churcher C.M."/>
            <person name="Collins M."/>
            <person name="Connor R."/>
            <person name="Cronin A."/>
            <person name="Davis P."/>
            <person name="Feltwell T."/>
            <person name="Fraser A."/>
            <person name="Gentles S."/>
            <person name="Goble A."/>
            <person name="Hamlin N."/>
            <person name="Harris D.E."/>
            <person name="Hidalgo J."/>
            <person name="Hodgson G."/>
            <person name="Holroyd S."/>
            <person name="Hornsby T."/>
            <person name="Howarth S."/>
            <person name="Huckle E.J."/>
            <person name="Hunt S."/>
            <person name="Jagels K."/>
            <person name="James K.D."/>
            <person name="Jones L."/>
            <person name="Jones M."/>
            <person name="Leather S."/>
            <person name="McDonald S."/>
            <person name="McLean J."/>
            <person name="Mooney P."/>
            <person name="Moule S."/>
            <person name="Mungall K.L."/>
            <person name="Murphy L.D."/>
            <person name="Niblett D."/>
            <person name="Odell C."/>
            <person name="Oliver K."/>
            <person name="O'Neil S."/>
            <person name="Pearson D."/>
            <person name="Quail M.A."/>
            <person name="Rabbinowitsch E."/>
            <person name="Rutherford K.M."/>
            <person name="Rutter S."/>
            <person name="Saunders D."/>
            <person name="Seeger K."/>
            <person name="Sharp S."/>
            <person name="Skelton J."/>
            <person name="Simmonds M.N."/>
            <person name="Squares R."/>
            <person name="Squares S."/>
            <person name="Stevens K."/>
            <person name="Taylor K."/>
            <person name="Taylor R.G."/>
            <person name="Tivey A."/>
            <person name="Walsh S.V."/>
            <person name="Warren T."/>
            <person name="Whitehead S."/>
            <person name="Woodward J.R."/>
            <person name="Volckaert G."/>
            <person name="Aert R."/>
            <person name="Robben J."/>
            <person name="Grymonprez B."/>
            <person name="Weltjens I."/>
            <person name="Vanstreels E."/>
            <person name="Rieger M."/>
            <person name="Schaefer M."/>
            <person name="Mueller-Auer S."/>
            <person name="Gabel C."/>
            <person name="Fuchs M."/>
            <person name="Duesterhoeft A."/>
            <person name="Fritzc C."/>
            <person name="Holzer E."/>
            <person name="Moestl D."/>
            <person name="Hilbert H."/>
            <person name="Borzym K."/>
            <person name="Langer I."/>
            <person name="Beck A."/>
            <person name="Lehrach H."/>
            <person name="Reinhardt R."/>
            <person name="Pohl T.M."/>
            <person name="Eger P."/>
            <person name="Zimmermann W."/>
            <person name="Wedler H."/>
            <person name="Wambutt R."/>
            <person name="Purnelle B."/>
            <person name="Goffeau A."/>
            <person name="Cadieu E."/>
            <person name="Dreano S."/>
            <person name="Gloux S."/>
            <person name="Lelaure V."/>
            <person name="Mottier S."/>
            <person name="Galibert F."/>
            <person name="Aves S.J."/>
            <person name="Xiang Z."/>
            <person name="Hunt C."/>
            <person name="Moore K."/>
            <person name="Hurst S.M."/>
            <person name="Lucas M."/>
            <person name="Rochet M."/>
            <person name="Gaillardin C."/>
            <person name="Tallada V.A."/>
            <person name="Garzon A."/>
            <person name="Thode G."/>
            <person name="Daga R.R."/>
            <person name="Cruzado L."/>
            <person name="Jimenez J."/>
            <person name="Sanchez M."/>
            <person name="del Rey F."/>
            <person name="Benito J."/>
            <person name="Dominguez A."/>
            <person name="Revuelta J.L."/>
            <person name="Moreno S."/>
            <person name="Armstrong J."/>
            <person name="Forsburg S.L."/>
            <person name="Cerutti L."/>
            <person name="Lowe T."/>
            <person name="McCombie W.R."/>
            <person name="Paulsen I."/>
            <person name="Potashkin J."/>
            <person name="Shpakovski G.V."/>
            <person name="Ussery D."/>
            <person name="Barrell B.G."/>
            <person name="Nurse P."/>
        </authorList>
    </citation>
    <scope>NUCLEOTIDE SEQUENCE [LARGE SCALE GENOMIC DNA]</scope>
    <source>
        <strain>972 / ATCC 24843</strain>
    </source>
</reference>
<protein>
    <recommendedName>
        <fullName>Protein rer1</fullName>
    </recommendedName>
    <alternativeName>
        <fullName>Retention of ER proteins 1</fullName>
    </alternativeName>
</protein>